<dbReference type="EMBL" id="M65239">
    <property type="protein sequence ID" value="AAA32351.1"/>
    <property type="molecule type" value="Genomic_DNA"/>
</dbReference>
<dbReference type="SMR" id="P27358"/>
<dbReference type="MEROPS" id="X19.001"/>
<dbReference type="GO" id="GO:0020002">
    <property type="term" value="C:host cell plasma membrane"/>
    <property type="evidence" value="ECO:0007669"/>
    <property type="project" value="UniProtKB-SubCell"/>
</dbReference>
<dbReference type="GO" id="GO:0016020">
    <property type="term" value="C:membrane"/>
    <property type="evidence" value="ECO:0007669"/>
    <property type="project" value="UniProtKB-KW"/>
</dbReference>
<dbReference type="GO" id="GO:0090680">
    <property type="term" value="P:viral release via disruption of host outer membrane"/>
    <property type="evidence" value="ECO:0000315"/>
    <property type="project" value="CACAO"/>
</dbReference>
<dbReference type="HAMAP" id="MF_04137">
    <property type="entry name" value="I_SPANIN_LAMBDA"/>
    <property type="match status" value="1"/>
</dbReference>
<dbReference type="InterPro" id="IPR004929">
    <property type="entry name" value="I-spanin"/>
</dbReference>
<dbReference type="Pfam" id="PF03245">
    <property type="entry name" value="Phage_lysis"/>
    <property type="match status" value="1"/>
</dbReference>
<evidence type="ECO:0000250" key="1">
    <source>
        <dbReference type="UniProtKB" id="P00726"/>
    </source>
</evidence>
<evidence type="ECO:0000255" key="2"/>
<evidence type="ECO:0000255" key="3">
    <source>
        <dbReference type="HAMAP-Rule" id="MF_04137"/>
    </source>
</evidence>
<evidence type="ECO:0000305" key="4">
    <source>
    </source>
</evidence>
<feature type="chain" id="PRO_0000077569" description="Spanin, inner membrane subunit">
    <location>
        <begin position="1"/>
        <end position="153"/>
    </location>
</feature>
<feature type="topological domain" description="Cytoplasmic" evidence="1">
    <location>
        <begin position="1"/>
        <end position="3"/>
    </location>
</feature>
<feature type="transmembrane region" description="Helical; Signal-anchor for type II membrane protein" evidence="2">
    <location>
        <begin position="4"/>
        <end position="24"/>
    </location>
</feature>
<feature type="topological domain" description="Periplasmic" evidence="1">
    <location>
        <begin position="25"/>
        <end position="153"/>
    </location>
</feature>
<feature type="coiled-coil region" evidence="3">
    <location>
        <begin position="65"/>
        <end position="92"/>
    </location>
</feature>
<feature type="disulfide bond" description="Interchain" evidence="3">
    <location>
        <position position="99"/>
    </location>
</feature>
<feature type="disulfide bond" description="Interchain" evidence="3">
    <location>
        <position position="152"/>
    </location>
</feature>
<keyword id="KW-0175">Coiled coil</keyword>
<keyword id="KW-0204">Cytolysis</keyword>
<keyword id="KW-1015">Disulfide bond</keyword>
<keyword id="KW-1030">Host cell inner membrane</keyword>
<keyword id="KW-0578">Host cell lysis by virus</keyword>
<keyword id="KW-1032">Host cell membrane</keyword>
<keyword id="KW-1043">Host membrane</keyword>
<keyword id="KW-0472">Membrane</keyword>
<keyword id="KW-0735">Signal-anchor</keyword>
<keyword id="KW-0812">Transmembrane</keyword>
<keyword id="KW-1133">Transmembrane helix</keyword>
<keyword id="KW-1188">Viral release from host cell</keyword>
<gene>
    <name type="primary">Rz</name>
</gene>
<comment type="function">
    <text evidence="3 4">Component of the spanin complex that disrupts the host outer membrane and participates in cell lysis during virus exit (PubMed:22904283). The spanin complex conducts the final step in host lysis by disrupting the outer membrane after holin and endolysin have permeabilized the inner membrane and degraded the host peptidoglycans. Host outer membrane disruption is due to local fusion between the inner and outer membrane performed by the spanin complex (By similarity).</text>
</comment>
<comment type="subunit">
    <text evidence="3">Homodimer; disulfide-linked. Interacts (via C-terminus) with the spanin outer lipoprotein subunit (via C-terminus). Part of the spanin complex which spans the entire periplasmic space. The spanin complex is composed of one homodimer of the i-spanin linked by intermolecular disulfide bonds involving two Cys residues and one homodimer of the o-spanin covalently linked by an intermolecular disulfide bond involving one Cys.</text>
</comment>
<comment type="subcellular location">
    <subcellularLocation>
        <location evidence="3">Host cell inner membrane</location>
        <topology evidence="3">Single-pass type II membrane protein</topology>
        <orientation evidence="3">Periplasmic side</orientation>
    </subcellularLocation>
</comment>
<comment type="domain">
    <text evidence="3">The coiled coil region is probably involved in host membrane fusion leading to lysis.</text>
</comment>
<comment type="similarity">
    <text evidence="3">Belongs to the Lambdavirus i-spanin family.</text>
</comment>
<sequence length="153" mass="17325">MNRVTAIISALVICIIVCLSWAVNHYRDNAITYKAQRDKNARELTLANRVITDIQMRQRDVAALDAKYTKELADAKAENDALRDDVAAGRRRLHIKAVCQSVREATTASGVDNAASPRLADTAERDYFTLRERLITMQKQLEGTQKYINEQCR</sequence>
<reference key="1">
    <citation type="journal article" date="1991" name="J. Bacteriol.">
        <title>Dual start motif in two lambdoid S genes unrelated to lambda S.</title>
        <authorList>
            <person name="Bonovich M.T."/>
            <person name="Young R."/>
        </authorList>
    </citation>
    <scope>NUCLEOTIDE SEQUENCE [GENOMIC DNA]</scope>
</reference>
<reference key="2">
    <citation type="journal article" date="2012" name="J. Bacteriol.">
        <title>The spanin complex is essential for lambda lysis.</title>
        <authorList>
            <person name="Berry J."/>
            <person name="Rajaure M."/>
            <person name="Pang T."/>
            <person name="Young R."/>
        </authorList>
    </citation>
    <scope>FUNCTION</scope>
</reference>
<protein>
    <recommendedName>
        <fullName evidence="3">Spanin, inner membrane subunit</fullName>
        <shortName evidence="3">i-spanin</shortName>
    </recommendedName>
    <alternativeName>
        <fullName evidence="3">Lysis protein Rz</fullName>
    </alternativeName>
</protein>
<name>SPAN1_BPP21</name>
<organismHost>
    <name type="scientific">Escherichia coli</name>
    <dbReference type="NCBI Taxonomy" id="562"/>
</organismHost>
<organism>
    <name type="scientific">Enterobacteria phage P21</name>
    <name type="common">Bacteriophage 21</name>
    <name type="synonym">Bacteriophage P21</name>
    <dbReference type="NCBI Taxonomy" id="10711"/>
    <lineage>
        <taxon>Viruses</taxon>
        <taxon>Duplodnaviria</taxon>
        <taxon>Heunggongvirae</taxon>
        <taxon>Uroviricota</taxon>
        <taxon>Caudoviricetes</taxon>
        <taxon>Lambdavirus</taxon>
        <taxon>Lambdavirus lambda</taxon>
    </lineage>
</organism>
<proteinExistence type="inferred from homology"/>
<accession>P27358</accession>